<organism>
    <name type="scientific">Salmonella typhimurium (strain LT2 / SGSC1412 / ATCC 700720)</name>
    <dbReference type="NCBI Taxonomy" id="99287"/>
    <lineage>
        <taxon>Bacteria</taxon>
        <taxon>Pseudomonadati</taxon>
        <taxon>Pseudomonadota</taxon>
        <taxon>Gammaproteobacteria</taxon>
        <taxon>Enterobacterales</taxon>
        <taxon>Enterobacteriaceae</taxon>
        <taxon>Salmonella</taxon>
    </lineage>
</organism>
<gene>
    <name evidence="1" type="primary">menH</name>
    <name type="ordered locus">STM2308</name>
</gene>
<accession>Q8ZNE9</accession>
<keyword id="KW-0456">Lyase</keyword>
<keyword id="KW-0474">Menaquinone biosynthesis</keyword>
<keyword id="KW-1185">Reference proteome</keyword>
<sequence>MMLHAQHMPGQPGTPSLVFLHGFSGDCHEWQPVGEQFHGCSRLYIDLPGHGGSAAIPVDGFADVIRLLRATLISYNILKFWLVGYSLGGRVAMMAACQGIPGLCGLVVEGGHPGLQNEQARAERRLSDGRWAERFRHEPLTEVFHDWYQQPVFASLTAQQRQALTALRSQNNGETLAAMLEATSLAVQPDLREALNALAFPFYYLCGERDSKFRALAQEVAATCHVIRNAGHNAHRENPAGVVDSLAQILRL</sequence>
<proteinExistence type="inferred from homology"/>
<dbReference type="EC" id="4.2.99.20" evidence="1"/>
<dbReference type="EMBL" id="AE006468">
    <property type="protein sequence ID" value="AAL21209.1"/>
    <property type="molecule type" value="Genomic_DNA"/>
</dbReference>
<dbReference type="RefSeq" id="WP_000979146.1">
    <property type="nucleotide sequence ID" value="NC_003197.2"/>
</dbReference>
<dbReference type="SMR" id="Q8ZNE9"/>
<dbReference type="STRING" id="99287.STM2308"/>
<dbReference type="ESTHER" id="salty-YFBB">
    <property type="family name" value="MenH_SHCHC"/>
</dbReference>
<dbReference type="PaxDb" id="99287-STM2308"/>
<dbReference type="KEGG" id="stm:STM2308"/>
<dbReference type="PATRIC" id="fig|99287.12.peg.2443"/>
<dbReference type="HOGENOM" id="CLU_020336_38_2_6"/>
<dbReference type="OMA" id="LNDWYQQ"/>
<dbReference type="PhylomeDB" id="Q8ZNE9"/>
<dbReference type="BioCyc" id="SENT99287:STM2308-MONOMER"/>
<dbReference type="UniPathway" id="UPA00079"/>
<dbReference type="UniPathway" id="UPA01057">
    <property type="reaction ID" value="UER00900"/>
</dbReference>
<dbReference type="Proteomes" id="UP000001014">
    <property type="component" value="Chromosome"/>
</dbReference>
<dbReference type="GO" id="GO:0070205">
    <property type="term" value="F:2-succinyl-6-hydroxy-2,4-cyclohexadiene-1-carboxylate synthase activity"/>
    <property type="evidence" value="ECO:0007669"/>
    <property type="project" value="UniProtKB-UniRule"/>
</dbReference>
<dbReference type="GO" id="GO:0009234">
    <property type="term" value="P:menaquinone biosynthetic process"/>
    <property type="evidence" value="ECO:0007669"/>
    <property type="project" value="UniProtKB-UniRule"/>
</dbReference>
<dbReference type="Gene3D" id="3.40.50.1820">
    <property type="entry name" value="alpha/beta hydrolase"/>
    <property type="match status" value="1"/>
</dbReference>
<dbReference type="HAMAP" id="MF_01660">
    <property type="entry name" value="MenH"/>
    <property type="match status" value="1"/>
</dbReference>
<dbReference type="InterPro" id="IPR000073">
    <property type="entry name" value="AB_hydrolase_1"/>
</dbReference>
<dbReference type="InterPro" id="IPR029058">
    <property type="entry name" value="AB_hydrolase_fold"/>
</dbReference>
<dbReference type="InterPro" id="IPR022485">
    <property type="entry name" value="SHCHC_synthase_MenH"/>
</dbReference>
<dbReference type="NCBIfam" id="TIGR03695">
    <property type="entry name" value="menH_SHCHC"/>
    <property type="match status" value="1"/>
</dbReference>
<dbReference type="NCBIfam" id="NF008340">
    <property type="entry name" value="PRK11126.1"/>
    <property type="match status" value="1"/>
</dbReference>
<dbReference type="PANTHER" id="PTHR42916">
    <property type="entry name" value="2-SUCCINYL-5-ENOLPYRUVYL-6-HYDROXY-3-CYCLOHEXENE-1-CARBOXYLATE SYNTHASE"/>
    <property type="match status" value="1"/>
</dbReference>
<dbReference type="PANTHER" id="PTHR42916:SF1">
    <property type="entry name" value="PROTEIN PHYLLO, CHLOROPLASTIC"/>
    <property type="match status" value="1"/>
</dbReference>
<dbReference type="Pfam" id="PF12697">
    <property type="entry name" value="Abhydrolase_6"/>
    <property type="match status" value="1"/>
</dbReference>
<dbReference type="SUPFAM" id="SSF53474">
    <property type="entry name" value="alpha/beta-Hydrolases"/>
    <property type="match status" value="1"/>
</dbReference>
<reference key="1">
    <citation type="journal article" date="2001" name="Nature">
        <title>Complete genome sequence of Salmonella enterica serovar Typhimurium LT2.</title>
        <authorList>
            <person name="McClelland M."/>
            <person name="Sanderson K.E."/>
            <person name="Spieth J."/>
            <person name="Clifton S.W."/>
            <person name="Latreille P."/>
            <person name="Courtney L."/>
            <person name="Porwollik S."/>
            <person name="Ali J."/>
            <person name="Dante M."/>
            <person name="Du F."/>
            <person name="Hou S."/>
            <person name="Layman D."/>
            <person name="Leonard S."/>
            <person name="Nguyen C."/>
            <person name="Scott K."/>
            <person name="Holmes A."/>
            <person name="Grewal N."/>
            <person name="Mulvaney E."/>
            <person name="Ryan E."/>
            <person name="Sun H."/>
            <person name="Florea L."/>
            <person name="Miller W."/>
            <person name="Stoneking T."/>
            <person name="Nhan M."/>
            <person name="Waterston R."/>
            <person name="Wilson R.K."/>
        </authorList>
    </citation>
    <scope>NUCLEOTIDE SEQUENCE [LARGE SCALE GENOMIC DNA]</scope>
    <source>
        <strain>LT2 / SGSC1412 / ATCC 700720</strain>
    </source>
</reference>
<feature type="chain" id="PRO_0000341922" description="2-succinyl-6-hydroxy-2,4-cyclohexadiene-1-carboxylate synthase">
    <location>
        <begin position="1"/>
        <end position="252"/>
    </location>
</feature>
<evidence type="ECO:0000255" key="1">
    <source>
        <dbReference type="HAMAP-Rule" id="MF_01660"/>
    </source>
</evidence>
<comment type="function">
    <text evidence="1">Catalyzes a proton abstraction reaction that results in 2,5-elimination of pyruvate from 2-succinyl-5-enolpyruvyl-6-hydroxy-3-cyclohexene-1-carboxylate (SEPHCHC) and the formation of 2-succinyl-6-hydroxy-2,4-cyclohexadiene-1-carboxylate (SHCHC).</text>
</comment>
<comment type="catalytic activity">
    <reaction evidence="1">
        <text>5-enolpyruvoyl-6-hydroxy-2-succinyl-cyclohex-3-ene-1-carboxylate = (1R,6R)-6-hydroxy-2-succinyl-cyclohexa-2,4-diene-1-carboxylate + pyruvate</text>
        <dbReference type="Rhea" id="RHEA:25597"/>
        <dbReference type="ChEBI" id="CHEBI:15361"/>
        <dbReference type="ChEBI" id="CHEBI:58689"/>
        <dbReference type="ChEBI" id="CHEBI:58818"/>
        <dbReference type="EC" id="4.2.99.20"/>
    </reaction>
</comment>
<comment type="pathway">
    <text evidence="1">Quinol/quinone metabolism; 1,4-dihydroxy-2-naphthoate biosynthesis; 1,4-dihydroxy-2-naphthoate from chorismate: step 3/7.</text>
</comment>
<comment type="pathway">
    <text evidence="1">Quinol/quinone metabolism; menaquinone biosynthesis.</text>
</comment>
<comment type="subunit">
    <text evidence="1">Monomer.</text>
</comment>
<comment type="similarity">
    <text evidence="1">Belongs to the AB hydrolase superfamily. MenH family.</text>
</comment>
<name>MENH_SALTY</name>
<protein>
    <recommendedName>
        <fullName evidence="1">2-succinyl-6-hydroxy-2,4-cyclohexadiene-1-carboxylate synthase</fullName>
        <shortName evidence="1">SHCHC synthase</shortName>
        <ecNumber evidence="1">4.2.99.20</ecNumber>
    </recommendedName>
</protein>